<reference key="1">
    <citation type="submission" date="2006-10" db="EMBL/GenBank/DDBJ databases">
        <authorList>
            <consortium name="Sanger Xenopus tropicalis EST/cDNA project"/>
        </authorList>
    </citation>
    <scope>NUCLEOTIDE SEQUENCE [LARGE SCALE MRNA]</scope>
    <source>
        <tissue>Gastrula</tissue>
    </source>
</reference>
<accession>Q28EM8</accession>
<dbReference type="EMBL" id="CR848166">
    <property type="protein sequence ID" value="CAJ83417.1"/>
    <property type="molecule type" value="mRNA"/>
</dbReference>
<dbReference type="RefSeq" id="NP_001016022.1">
    <property type="nucleotide sequence ID" value="NM_001016022.2"/>
</dbReference>
<dbReference type="SMR" id="Q28EM8"/>
<dbReference type="FunCoup" id="Q28EM8">
    <property type="interactions" value="2931"/>
</dbReference>
<dbReference type="STRING" id="8364.ENSXETP00000045159"/>
<dbReference type="PaxDb" id="8364-ENSXETP00000021221"/>
<dbReference type="GeneID" id="548776"/>
<dbReference type="KEGG" id="xtr:548776"/>
<dbReference type="AGR" id="Xenbase:XB-GENE-962658"/>
<dbReference type="CTD" id="25875"/>
<dbReference type="Xenbase" id="XB-GENE-962658">
    <property type="gene designation" value="letmd1"/>
</dbReference>
<dbReference type="eggNOG" id="KOG4263">
    <property type="taxonomic scope" value="Eukaryota"/>
</dbReference>
<dbReference type="InParanoid" id="Q28EM8"/>
<dbReference type="OrthoDB" id="73691at2759"/>
<dbReference type="Proteomes" id="UP000008143">
    <property type="component" value="Chromosome 2"/>
</dbReference>
<dbReference type="Bgee" id="ENSXETG00000009635">
    <property type="expression patterns" value="Expressed in egg cell and 13 other cell types or tissues"/>
</dbReference>
<dbReference type="ExpressionAtlas" id="Q28EM8">
    <property type="expression patterns" value="baseline"/>
</dbReference>
<dbReference type="GO" id="GO:0005743">
    <property type="term" value="C:mitochondrial inner membrane"/>
    <property type="evidence" value="ECO:0007669"/>
    <property type="project" value="UniProtKB-SubCell"/>
</dbReference>
<dbReference type="GO" id="GO:0005741">
    <property type="term" value="C:mitochondrial outer membrane"/>
    <property type="evidence" value="ECO:0007669"/>
    <property type="project" value="UniProtKB-SubCell"/>
</dbReference>
<dbReference type="GO" id="GO:0005634">
    <property type="term" value="C:nucleus"/>
    <property type="evidence" value="ECO:0007669"/>
    <property type="project" value="UniProtKB-SubCell"/>
</dbReference>
<dbReference type="GO" id="GO:0043022">
    <property type="term" value="F:ribosome binding"/>
    <property type="evidence" value="ECO:0007669"/>
    <property type="project" value="InterPro"/>
</dbReference>
<dbReference type="GO" id="GO:0007005">
    <property type="term" value="P:mitochondrion organization"/>
    <property type="evidence" value="ECO:0000250"/>
    <property type="project" value="UniProtKB"/>
</dbReference>
<dbReference type="InterPro" id="IPR033122">
    <property type="entry name" value="LETM1-like_RBD"/>
</dbReference>
<dbReference type="InterPro" id="IPR044202">
    <property type="entry name" value="LETM1/MDM38-like"/>
</dbReference>
<dbReference type="PANTHER" id="PTHR14009:SF13">
    <property type="entry name" value="LETM1 DOMAIN-CONTAINING PROTEIN 1"/>
    <property type="match status" value="1"/>
</dbReference>
<dbReference type="PANTHER" id="PTHR14009">
    <property type="entry name" value="LEUCINE ZIPPER-EF-HAND CONTAINING TRANSMEMBRANE PROTEIN"/>
    <property type="match status" value="1"/>
</dbReference>
<dbReference type="Pfam" id="PF07766">
    <property type="entry name" value="LETM1_RBD"/>
    <property type="match status" value="1"/>
</dbReference>
<dbReference type="PROSITE" id="PS51758">
    <property type="entry name" value="LETM1_RBD"/>
    <property type="match status" value="1"/>
</dbReference>
<comment type="function">
    <text evidence="2">May play an essential role for mitochondrial structure and function.</text>
</comment>
<comment type="subcellular location">
    <subcellularLocation>
        <location evidence="1">Mitochondrion outer membrane</location>
        <topology evidence="1">Single-pass membrane protein</topology>
    </subcellularLocation>
    <subcellularLocation>
        <location evidence="2">Nucleus</location>
    </subcellularLocation>
    <subcellularLocation>
        <location evidence="2">Mitochondrion inner membrane</location>
        <topology evidence="3">Single-pass membrane protein</topology>
    </subcellularLocation>
</comment>
<sequence length="351" mass="41211">MLSGMALCRTRNCRFMMGEDGRRMRKCVLLLYQPCHLSTNSKPKSMLSLIASKAKYANEKYEHFLERKFPNFYLLYSTFMKGFRMLMTEAKEVGRIKQRMNHQGIPFHQLPYREMEKLRQFRRDIIKAAPVVIISIPPFANYLVFVLMYFFPRQLLIRHFWTPKQREEFLDIYHRMRVEAYPEILDGLLNAVPKLSERNLRNQMFQLCTQVQHGTHPQVENLHAVCTAFSGPPLGMKRLDVQQMKALSRVMFLTPHLPAFLLQHRLGSHICEIQNLDCALLKLGVNELSEEELKRACYIRGLNSTHLSREDCETWLHCWLQLSSMLKVSEASLLLHCMVLLSANYLQSIKQ</sequence>
<keyword id="KW-0472">Membrane</keyword>
<keyword id="KW-0496">Mitochondrion</keyword>
<keyword id="KW-0999">Mitochondrion inner membrane</keyword>
<keyword id="KW-1000">Mitochondrion outer membrane</keyword>
<keyword id="KW-0539">Nucleus</keyword>
<keyword id="KW-1185">Reference proteome</keyword>
<keyword id="KW-0812">Transmembrane</keyword>
<keyword id="KW-1133">Transmembrane helix</keyword>
<proteinExistence type="evidence at transcript level"/>
<organism>
    <name type="scientific">Xenopus tropicalis</name>
    <name type="common">Western clawed frog</name>
    <name type="synonym">Silurana tropicalis</name>
    <dbReference type="NCBI Taxonomy" id="8364"/>
    <lineage>
        <taxon>Eukaryota</taxon>
        <taxon>Metazoa</taxon>
        <taxon>Chordata</taxon>
        <taxon>Craniata</taxon>
        <taxon>Vertebrata</taxon>
        <taxon>Euteleostomi</taxon>
        <taxon>Amphibia</taxon>
        <taxon>Batrachia</taxon>
        <taxon>Anura</taxon>
        <taxon>Pipoidea</taxon>
        <taxon>Pipidae</taxon>
        <taxon>Xenopodinae</taxon>
        <taxon>Xenopus</taxon>
        <taxon>Silurana</taxon>
    </lineage>
</organism>
<gene>
    <name evidence="1" type="primary">letmd1</name>
    <name type="ORF">TGas100d16.1</name>
</gene>
<name>LTMD1_XENTR</name>
<evidence type="ECO:0000250" key="1">
    <source>
        <dbReference type="UniProtKB" id="Q6P1Q0"/>
    </source>
</evidence>
<evidence type="ECO:0000250" key="2">
    <source>
        <dbReference type="UniProtKB" id="Q924L1"/>
    </source>
</evidence>
<evidence type="ECO:0000255" key="3"/>
<evidence type="ECO:0000255" key="4">
    <source>
        <dbReference type="PROSITE-ProRule" id="PRU01094"/>
    </source>
</evidence>
<protein>
    <recommendedName>
        <fullName evidence="1">LETM1 domain-containing protein 1</fullName>
    </recommendedName>
</protein>
<feature type="chain" id="PRO_0000310421" description="LETM1 domain-containing protein 1">
    <location>
        <begin position="1"/>
        <end position="351"/>
    </location>
</feature>
<feature type="topological domain" description="Cytoplasmic" evidence="3">
    <location>
        <begin position="1"/>
        <end position="130"/>
    </location>
</feature>
<feature type="transmembrane region" description="Helical" evidence="3">
    <location>
        <begin position="131"/>
        <end position="151"/>
    </location>
</feature>
<feature type="topological domain" description="Mitochondrial intermembrane" evidence="3">
    <location>
        <begin position="152"/>
        <end position="351"/>
    </location>
</feature>
<feature type="domain" description="Letm1 RBD" evidence="4">
    <location>
        <begin position="172"/>
        <end position="351"/>
    </location>
</feature>